<keyword id="KW-0240">DNA-directed RNA polymerase</keyword>
<keyword id="KW-0548">Nucleotidyltransferase</keyword>
<keyword id="KW-0804">Transcription</keyword>
<keyword id="KW-0808">Transferase</keyword>
<protein>
    <recommendedName>
        <fullName evidence="2">DNA-directed RNA polymerase subunit alpha</fullName>
        <shortName evidence="2">RNAP subunit alpha</shortName>
        <ecNumber evidence="2">2.7.7.6</ecNumber>
    </recommendedName>
    <alternativeName>
        <fullName evidence="2">RNA polymerase subunit alpha</fullName>
    </alternativeName>
    <alternativeName>
        <fullName evidence="2">Transcriptase subunit alpha</fullName>
    </alternativeName>
</protein>
<gene>
    <name evidence="2" type="primary">rpoA</name>
    <name type="ordered locus">syc1888_d</name>
</gene>
<proteinExistence type="inferred from homology"/>
<reference key="1">
    <citation type="journal article" date="1997" name="Gene">
        <title>Organization of a large gene cluster encoding ribosomal proteins in the cyanobacterium Synechococcus sp. strain PCC 6301: comparison of gene clusters among cyanobacteria, eubacteria and chloroplast genomes.</title>
        <authorList>
            <person name="Sugita M."/>
            <person name="Sugishita H."/>
            <person name="Fujishiro T."/>
            <person name="Tsuboi M."/>
            <person name="Sugita C."/>
            <person name="Endo T."/>
            <person name="Sugiura M."/>
        </authorList>
    </citation>
    <scope>NUCLEOTIDE SEQUENCE [GENOMIC DNA]</scope>
</reference>
<reference key="2">
    <citation type="journal article" date="2007" name="Photosyn. Res.">
        <title>Complete nucleotide sequence of the freshwater unicellular cyanobacterium Synechococcus elongatus PCC 6301 chromosome: gene content and organization.</title>
        <authorList>
            <person name="Sugita C."/>
            <person name="Ogata K."/>
            <person name="Shikata M."/>
            <person name="Jikuya H."/>
            <person name="Takano J."/>
            <person name="Furumichi M."/>
            <person name="Kanehisa M."/>
            <person name="Omata T."/>
            <person name="Sugiura M."/>
            <person name="Sugita M."/>
        </authorList>
    </citation>
    <scope>NUCLEOTIDE SEQUENCE [LARGE SCALE GENOMIC DNA]</scope>
    <source>
        <strain>ATCC 27144 / PCC 6301 / SAUG 1402/1</strain>
    </source>
</reference>
<name>RPOA_SYNP6</name>
<organism>
    <name type="scientific">Synechococcus sp. (strain ATCC 27144 / PCC 6301 / SAUG 1402/1)</name>
    <name type="common">Anacystis nidulans</name>
    <dbReference type="NCBI Taxonomy" id="269084"/>
    <lineage>
        <taxon>Bacteria</taxon>
        <taxon>Bacillati</taxon>
        <taxon>Cyanobacteriota</taxon>
        <taxon>Cyanophyceae</taxon>
        <taxon>Synechococcales</taxon>
        <taxon>Synechococcaceae</taxon>
        <taxon>Synechococcus</taxon>
    </lineage>
</organism>
<accession>O24710</accession>
<comment type="function">
    <text evidence="2">DNA-dependent RNA polymerase catalyzes the transcription of DNA into RNA using the four ribonucleoside triphosphates as substrates.</text>
</comment>
<comment type="catalytic activity">
    <reaction evidence="2">
        <text>RNA(n) + a ribonucleoside 5'-triphosphate = RNA(n+1) + diphosphate</text>
        <dbReference type="Rhea" id="RHEA:21248"/>
        <dbReference type="Rhea" id="RHEA-COMP:14527"/>
        <dbReference type="Rhea" id="RHEA-COMP:17342"/>
        <dbReference type="ChEBI" id="CHEBI:33019"/>
        <dbReference type="ChEBI" id="CHEBI:61557"/>
        <dbReference type="ChEBI" id="CHEBI:140395"/>
        <dbReference type="EC" id="2.7.7.6"/>
    </reaction>
</comment>
<comment type="subunit">
    <text evidence="1">Homodimer. In cyanobacteria the RNAP catalytic core is composed of 2 alpha, 1 beta, 1 beta', 1 gamma and 1 omega subunit. When a sigma factor is associated with the core the holoenzyme is formed, which can initiate transcription (By similarity).</text>
</comment>
<comment type="domain">
    <text evidence="2">The N-terminal domain is essential for RNAP assembly and basal transcription, whereas the C-terminal domain is involved in interaction with transcriptional regulators and with upstream promoter elements.</text>
</comment>
<comment type="similarity">
    <text evidence="2">Belongs to the RNA polymerase alpha chain family.</text>
</comment>
<dbReference type="EC" id="2.7.7.6" evidence="2"/>
<dbReference type="EMBL" id="AB000111">
    <property type="protein sequence ID" value="BAA22472.1"/>
    <property type="molecule type" value="Genomic_DNA"/>
</dbReference>
<dbReference type="EMBL" id="AP008231">
    <property type="protein sequence ID" value="BAD80078.1"/>
    <property type="molecule type" value="Genomic_DNA"/>
</dbReference>
<dbReference type="RefSeq" id="WP_011244198.1">
    <property type="nucleotide sequence ID" value="NZ_CP085785.1"/>
</dbReference>
<dbReference type="SMR" id="O24710"/>
<dbReference type="KEGG" id="syc:syc1888_d"/>
<dbReference type="eggNOG" id="COG0202">
    <property type="taxonomic scope" value="Bacteria"/>
</dbReference>
<dbReference type="Proteomes" id="UP000001175">
    <property type="component" value="Chromosome"/>
</dbReference>
<dbReference type="GO" id="GO:0005737">
    <property type="term" value="C:cytoplasm"/>
    <property type="evidence" value="ECO:0007669"/>
    <property type="project" value="UniProtKB-ARBA"/>
</dbReference>
<dbReference type="GO" id="GO:0000428">
    <property type="term" value="C:DNA-directed RNA polymerase complex"/>
    <property type="evidence" value="ECO:0007669"/>
    <property type="project" value="UniProtKB-KW"/>
</dbReference>
<dbReference type="GO" id="GO:0003677">
    <property type="term" value="F:DNA binding"/>
    <property type="evidence" value="ECO:0007669"/>
    <property type="project" value="UniProtKB-UniRule"/>
</dbReference>
<dbReference type="GO" id="GO:0003899">
    <property type="term" value="F:DNA-directed RNA polymerase activity"/>
    <property type="evidence" value="ECO:0007669"/>
    <property type="project" value="UniProtKB-UniRule"/>
</dbReference>
<dbReference type="GO" id="GO:0046983">
    <property type="term" value="F:protein dimerization activity"/>
    <property type="evidence" value="ECO:0007669"/>
    <property type="project" value="InterPro"/>
</dbReference>
<dbReference type="GO" id="GO:0006351">
    <property type="term" value="P:DNA-templated transcription"/>
    <property type="evidence" value="ECO:0007669"/>
    <property type="project" value="UniProtKB-UniRule"/>
</dbReference>
<dbReference type="CDD" id="cd06928">
    <property type="entry name" value="RNAP_alpha_NTD"/>
    <property type="match status" value="1"/>
</dbReference>
<dbReference type="FunFam" id="2.170.120.12:FF:000001">
    <property type="entry name" value="DNA-directed RNA polymerase subunit alpha"/>
    <property type="match status" value="1"/>
</dbReference>
<dbReference type="Gene3D" id="1.10.150.20">
    <property type="entry name" value="5' to 3' exonuclease, C-terminal subdomain"/>
    <property type="match status" value="1"/>
</dbReference>
<dbReference type="Gene3D" id="2.170.120.12">
    <property type="entry name" value="DNA-directed RNA polymerase, insert domain"/>
    <property type="match status" value="1"/>
</dbReference>
<dbReference type="Gene3D" id="3.30.1360.10">
    <property type="entry name" value="RNA polymerase, RBP11-like subunit"/>
    <property type="match status" value="1"/>
</dbReference>
<dbReference type="HAMAP" id="MF_00059">
    <property type="entry name" value="RNApol_bact_RpoA"/>
    <property type="match status" value="1"/>
</dbReference>
<dbReference type="InterPro" id="IPR011262">
    <property type="entry name" value="DNA-dir_RNA_pol_insert"/>
</dbReference>
<dbReference type="InterPro" id="IPR011263">
    <property type="entry name" value="DNA-dir_RNA_pol_RpoA/D/Rpb3"/>
</dbReference>
<dbReference type="InterPro" id="IPR011773">
    <property type="entry name" value="DNA-dir_RpoA"/>
</dbReference>
<dbReference type="InterPro" id="IPR036603">
    <property type="entry name" value="RBP11-like"/>
</dbReference>
<dbReference type="InterPro" id="IPR011260">
    <property type="entry name" value="RNAP_asu_C"/>
</dbReference>
<dbReference type="InterPro" id="IPR036643">
    <property type="entry name" value="RNApol_insert_sf"/>
</dbReference>
<dbReference type="NCBIfam" id="NF003513">
    <property type="entry name" value="PRK05182.1-2"/>
    <property type="match status" value="1"/>
</dbReference>
<dbReference type="NCBIfam" id="NF003516">
    <property type="entry name" value="PRK05182.2-2"/>
    <property type="match status" value="1"/>
</dbReference>
<dbReference type="NCBIfam" id="NF003519">
    <property type="entry name" value="PRK05182.2-5"/>
    <property type="match status" value="1"/>
</dbReference>
<dbReference type="NCBIfam" id="TIGR02027">
    <property type="entry name" value="rpoA"/>
    <property type="match status" value="1"/>
</dbReference>
<dbReference type="Pfam" id="PF01000">
    <property type="entry name" value="RNA_pol_A_bac"/>
    <property type="match status" value="1"/>
</dbReference>
<dbReference type="Pfam" id="PF03118">
    <property type="entry name" value="RNA_pol_A_CTD"/>
    <property type="match status" value="1"/>
</dbReference>
<dbReference type="Pfam" id="PF01193">
    <property type="entry name" value="RNA_pol_L"/>
    <property type="match status" value="1"/>
</dbReference>
<dbReference type="SMART" id="SM00662">
    <property type="entry name" value="RPOLD"/>
    <property type="match status" value="1"/>
</dbReference>
<dbReference type="SUPFAM" id="SSF47789">
    <property type="entry name" value="C-terminal domain of RNA polymerase alpha subunit"/>
    <property type="match status" value="1"/>
</dbReference>
<dbReference type="SUPFAM" id="SSF56553">
    <property type="entry name" value="Insert subdomain of RNA polymerase alpha subunit"/>
    <property type="match status" value="1"/>
</dbReference>
<dbReference type="SUPFAM" id="SSF55257">
    <property type="entry name" value="RBP11-like subunits of RNA polymerase"/>
    <property type="match status" value="1"/>
</dbReference>
<evidence type="ECO:0000250" key="1"/>
<evidence type="ECO:0000255" key="2">
    <source>
        <dbReference type="HAMAP-Rule" id="MF_00059"/>
    </source>
</evidence>
<sequence>MTFQVECVESRTEADQGQYGRFSIEPLARGQGTTVGNALRRVLLSNLEGTAVTAVRIGGVNHEFATIPGVREDVLDILLNVRELVVHAHSPQPQIGRLRVVGPATVTAADVDFGPEVEVINPNHYIASLSEGATLEMELKVEWGTGYRAIDRSHDETTALDFLQLDAVFMPVRRVNYSVEDARVGESTAIDRLVLEVWTNGSLSPQEALSQAASCLVALFEPLKNVSVGSTHTADPEPTPESQTPIEDLQLSVRAYNCLKRAQVNSVADLLSYTYEDLLEIKNFGQKSAEEVVEALERIGIKLQESKVS</sequence>
<feature type="chain" id="PRO_0000175402" description="DNA-directed RNA polymerase subunit alpha">
    <location>
        <begin position="1"/>
        <end position="309"/>
    </location>
</feature>
<feature type="region of interest" description="Alpha N-terminal domain (alpha-NTD)" evidence="2">
    <location>
        <begin position="1"/>
        <end position="227"/>
    </location>
</feature>
<feature type="region of interest" description="Alpha C-terminal domain (alpha-CTD)" evidence="2">
    <location>
        <begin position="239"/>
        <end position="309"/>
    </location>
</feature>